<accession>Q3ABT8</accession>
<name>3MGH_CARHZ</name>
<proteinExistence type="inferred from homology"/>
<gene>
    <name type="ordered locus">CHY_1567</name>
</gene>
<feature type="chain" id="PRO_0000265005" description="Putative 3-methyladenine DNA glycosylase">
    <location>
        <begin position="1"/>
        <end position="191"/>
    </location>
</feature>
<comment type="similarity">
    <text evidence="1">Belongs to the DNA glycosylase MPG family.</text>
</comment>
<protein>
    <recommendedName>
        <fullName evidence="1">Putative 3-methyladenine DNA glycosylase</fullName>
        <ecNumber evidence="1">3.2.2.-</ecNumber>
    </recommendedName>
</protein>
<reference key="1">
    <citation type="journal article" date="2005" name="PLoS Genet.">
        <title>Life in hot carbon monoxide: the complete genome sequence of Carboxydothermus hydrogenoformans Z-2901.</title>
        <authorList>
            <person name="Wu M."/>
            <person name="Ren Q."/>
            <person name="Durkin A.S."/>
            <person name="Daugherty S.C."/>
            <person name="Brinkac L.M."/>
            <person name="Dodson R.J."/>
            <person name="Madupu R."/>
            <person name="Sullivan S.A."/>
            <person name="Kolonay J.F."/>
            <person name="Nelson W.C."/>
            <person name="Tallon L.J."/>
            <person name="Jones K.M."/>
            <person name="Ulrich L.E."/>
            <person name="Gonzalez J.M."/>
            <person name="Zhulin I.B."/>
            <person name="Robb F.T."/>
            <person name="Eisen J.A."/>
        </authorList>
    </citation>
    <scope>NUCLEOTIDE SEQUENCE [LARGE SCALE GENOMIC DNA]</scope>
    <source>
        <strain>ATCC BAA-161 / DSM 6008 / Z-2901</strain>
    </source>
</reference>
<organism>
    <name type="scientific">Carboxydothermus hydrogenoformans (strain ATCC BAA-161 / DSM 6008 / Z-2901)</name>
    <dbReference type="NCBI Taxonomy" id="246194"/>
    <lineage>
        <taxon>Bacteria</taxon>
        <taxon>Bacillati</taxon>
        <taxon>Bacillota</taxon>
        <taxon>Clostridia</taxon>
        <taxon>Thermoanaerobacterales</taxon>
        <taxon>Thermoanaerobacteraceae</taxon>
        <taxon>Carboxydothermus</taxon>
    </lineage>
</organism>
<dbReference type="EC" id="3.2.2.-" evidence="1"/>
<dbReference type="EMBL" id="CP000141">
    <property type="protein sequence ID" value="ABB15839.1"/>
    <property type="molecule type" value="Genomic_DNA"/>
</dbReference>
<dbReference type="RefSeq" id="WP_011344471.1">
    <property type="nucleotide sequence ID" value="NC_007503.1"/>
</dbReference>
<dbReference type="SMR" id="Q3ABT8"/>
<dbReference type="FunCoup" id="Q3ABT8">
    <property type="interactions" value="87"/>
</dbReference>
<dbReference type="STRING" id="246194.CHY_1567"/>
<dbReference type="KEGG" id="chy:CHY_1567"/>
<dbReference type="eggNOG" id="COG2094">
    <property type="taxonomic scope" value="Bacteria"/>
</dbReference>
<dbReference type="HOGENOM" id="CLU_060471_4_1_9"/>
<dbReference type="InParanoid" id="Q3ABT8"/>
<dbReference type="OrthoDB" id="9794313at2"/>
<dbReference type="Proteomes" id="UP000002706">
    <property type="component" value="Chromosome"/>
</dbReference>
<dbReference type="GO" id="GO:0003905">
    <property type="term" value="F:alkylbase DNA N-glycosylase activity"/>
    <property type="evidence" value="ECO:0007669"/>
    <property type="project" value="InterPro"/>
</dbReference>
<dbReference type="GO" id="GO:0003677">
    <property type="term" value="F:DNA binding"/>
    <property type="evidence" value="ECO:0007669"/>
    <property type="project" value="InterPro"/>
</dbReference>
<dbReference type="GO" id="GO:0006284">
    <property type="term" value="P:base-excision repair"/>
    <property type="evidence" value="ECO:0007669"/>
    <property type="project" value="InterPro"/>
</dbReference>
<dbReference type="CDD" id="cd00540">
    <property type="entry name" value="AAG"/>
    <property type="match status" value="1"/>
</dbReference>
<dbReference type="FunFam" id="3.10.300.10:FF:000001">
    <property type="entry name" value="Putative 3-methyladenine DNA glycosylase"/>
    <property type="match status" value="1"/>
</dbReference>
<dbReference type="Gene3D" id="3.10.300.10">
    <property type="entry name" value="Methylpurine-DNA glycosylase (MPG)"/>
    <property type="match status" value="1"/>
</dbReference>
<dbReference type="HAMAP" id="MF_00527">
    <property type="entry name" value="3MGH"/>
    <property type="match status" value="1"/>
</dbReference>
<dbReference type="InterPro" id="IPR011034">
    <property type="entry name" value="Formyl_transferase-like_C_sf"/>
</dbReference>
<dbReference type="InterPro" id="IPR003180">
    <property type="entry name" value="MPG"/>
</dbReference>
<dbReference type="InterPro" id="IPR036995">
    <property type="entry name" value="MPG_sf"/>
</dbReference>
<dbReference type="NCBIfam" id="TIGR00567">
    <property type="entry name" value="3mg"/>
    <property type="match status" value="1"/>
</dbReference>
<dbReference type="NCBIfam" id="NF002003">
    <property type="entry name" value="PRK00802.1-3"/>
    <property type="match status" value="1"/>
</dbReference>
<dbReference type="PANTHER" id="PTHR10429">
    <property type="entry name" value="DNA-3-METHYLADENINE GLYCOSYLASE"/>
    <property type="match status" value="1"/>
</dbReference>
<dbReference type="PANTHER" id="PTHR10429:SF0">
    <property type="entry name" value="DNA-3-METHYLADENINE GLYCOSYLASE"/>
    <property type="match status" value="1"/>
</dbReference>
<dbReference type="Pfam" id="PF02245">
    <property type="entry name" value="Pur_DNA_glyco"/>
    <property type="match status" value="1"/>
</dbReference>
<dbReference type="SUPFAM" id="SSF50486">
    <property type="entry name" value="FMT C-terminal domain-like"/>
    <property type="match status" value="1"/>
</dbReference>
<evidence type="ECO:0000255" key="1">
    <source>
        <dbReference type="HAMAP-Rule" id="MF_00527"/>
    </source>
</evidence>
<sequence length="191" mass="21399">MLLPRQFYARDVLIVAKDLLNCYLVREYNGHLLIGKIVETEAYHQNDPACHAYRGKTKRNEVMFGPPGHAYVYFTYGMHYCFNVVTGAIGRAEAVLIRALEPVKGIDIIKTLRGGKSERELLSGPAKLTQGLAIDLKLNGHDLTGGKILYITKGEPVAEEDIVVTTRIGINAGKDLPYRFYLKNNKYVSKK</sequence>
<keyword id="KW-0227">DNA damage</keyword>
<keyword id="KW-0234">DNA repair</keyword>
<keyword id="KW-0378">Hydrolase</keyword>
<keyword id="KW-1185">Reference proteome</keyword>